<reference key="1">
    <citation type="journal article" date="2004" name="Proc. Natl. Acad. Sci. U.S.A.">
        <title>The complete genomic sequence of Nocardia farcinica IFM 10152.</title>
        <authorList>
            <person name="Ishikawa J."/>
            <person name="Yamashita A."/>
            <person name="Mikami Y."/>
            <person name="Hoshino Y."/>
            <person name="Kurita H."/>
            <person name="Hotta K."/>
            <person name="Shiba T."/>
            <person name="Hattori M."/>
        </authorList>
    </citation>
    <scope>NUCLEOTIDE SEQUENCE [LARGE SCALE GENOMIC DNA]</scope>
    <source>
        <strain>IFM 10152</strain>
    </source>
</reference>
<gene>
    <name type="ordered locus">NFA_41430</name>
</gene>
<keyword id="KW-1185">Reference proteome</keyword>
<protein>
    <recommendedName>
        <fullName evidence="1">UPF0102 protein NFA_41430</fullName>
    </recommendedName>
</protein>
<feature type="chain" id="PRO_0000336216" description="UPF0102 protein NFA_41430">
    <location>
        <begin position="1"/>
        <end position="127"/>
    </location>
</feature>
<proteinExistence type="inferred from homology"/>
<dbReference type="EMBL" id="AP006618">
    <property type="protein sequence ID" value="BAD58992.1"/>
    <property type="molecule type" value="Genomic_DNA"/>
</dbReference>
<dbReference type="SMR" id="Q5YS49"/>
<dbReference type="STRING" id="247156.NFA_41430"/>
<dbReference type="KEGG" id="nfa:NFA_41430"/>
<dbReference type="eggNOG" id="COG0792">
    <property type="taxonomic scope" value="Bacteria"/>
</dbReference>
<dbReference type="HOGENOM" id="CLU_115353_2_3_11"/>
<dbReference type="OrthoDB" id="9794876at2"/>
<dbReference type="Proteomes" id="UP000006820">
    <property type="component" value="Chromosome"/>
</dbReference>
<dbReference type="GO" id="GO:0003676">
    <property type="term" value="F:nucleic acid binding"/>
    <property type="evidence" value="ECO:0007669"/>
    <property type="project" value="InterPro"/>
</dbReference>
<dbReference type="CDD" id="cd20736">
    <property type="entry name" value="PoNe_Nuclease"/>
    <property type="match status" value="1"/>
</dbReference>
<dbReference type="Gene3D" id="3.40.1350.10">
    <property type="match status" value="1"/>
</dbReference>
<dbReference type="HAMAP" id="MF_00048">
    <property type="entry name" value="UPF0102"/>
    <property type="match status" value="1"/>
</dbReference>
<dbReference type="InterPro" id="IPR011335">
    <property type="entry name" value="Restrct_endonuc-II-like"/>
</dbReference>
<dbReference type="InterPro" id="IPR011856">
    <property type="entry name" value="tRNA_endonuc-like_dom_sf"/>
</dbReference>
<dbReference type="InterPro" id="IPR003509">
    <property type="entry name" value="UPF0102_YraN-like"/>
</dbReference>
<dbReference type="NCBIfam" id="NF009150">
    <property type="entry name" value="PRK12497.1-3"/>
    <property type="match status" value="1"/>
</dbReference>
<dbReference type="NCBIfam" id="NF009154">
    <property type="entry name" value="PRK12497.3-3"/>
    <property type="match status" value="1"/>
</dbReference>
<dbReference type="NCBIfam" id="TIGR00252">
    <property type="entry name" value="YraN family protein"/>
    <property type="match status" value="1"/>
</dbReference>
<dbReference type="PANTHER" id="PTHR34039">
    <property type="entry name" value="UPF0102 PROTEIN YRAN"/>
    <property type="match status" value="1"/>
</dbReference>
<dbReference type="PANTHER" id="PTHR34039:SF1">
    <property type="entry name" value="UPF0102 PROTEIN YRAN"/>
    <property type="match status" value="1"/>
</dbReference>
<dbReference type="Pfam" id="PF02021">
    <property type="entry name" value="UPF0102"/>
    <property type="match status" value="1"/>
</dbReference>
<dbReference type="SUPFAM" id="SSF52980">
    <property type="entry name" value="Restriction endonuclease-like"/>
    <property type="match status" value="1"/>
</dbReference>
<evidence type="ECO:0000255" key="1">
    <source>
        <dbReference type="HAMAP-Rule" id="MF_00048"/>
    </source>
</evidence>
<sequence length="127" mass="14271">MASATILARVGDKQALGAHGEELAARFLRDAGMEIVARNWRCRYGELDLIARDAQTTAFVEVKTRRGLGFGTPAEAVTFTKRQRIRRLALLWLAEQDGPWQQIRFDVVSVLMTPGHRPVIDHLKAVF</sequence>
<organism>
    <name type="scientific">Nocardia farcinica (strain IFM 10152)</name>
    <dbReference type="NCBI Taxonomy" id="247156"/>
    <lineage>
        <taxon>Bacteria</taxon>
        <taxon>Bacillati</taxon>
        <taxon>Actinomycetota</taxon>
        <taxon>Actinomycetes</taxon>
        <taxon>Mycobacteriales</taxon>
        <taxon>Nocardiaceae</taxon>
        <taxon>Nocardia</taxon>
    </lineage>
</organism>
<comment type="similarity">
    <text evidence="1">Belongs to the UPF0102 family.</text>
</comment>
<name>Y4143_NOCFA</name>
<accession>Q5YS49</accession>